<protein>
    <recommendedName>
        <fullName evidence="1">Large ribosomal subunit protein bL21</fullName>
    </recommendedName>
    <alternativeName>
        <fullName evidence="2">50S ribosomal protein L21</fullName>
    </alternativeName>
</protein>
<name>RL21_MYCCT</name>
<comment type="function">
    <text evidence="1">This protein binds to 23S rRNA in the presence of protein L20.</text>
</comment>
<comment type="subunit">
    <text evidence="1">Part of the 50S ribosomal subunit. Contacts protein L20.</text>
</comment>
<comment type="similarity">
    <text evidence="1">Belongs to the bacterial ribosomal protein bL21 family.</text>
</comment>
<reference key="1">
    <citation type="submission" date="2005-09" db="EMBL/GenBank/DDBJ databases">
        <authorList>
            <person name="Glass J.I."/>
            <person name="Lartigue C."/>
            <person name="Pfannkoch C."/>
            <person name="Baden-Tillson H."/>
            <person name="Smith H.O."/>
            <person name="Venter J.C."/>
            <person name="Roske K."/>
            <person name="Wise K.S."/>
            <person name="Calcutt M.J."/>
            <person name="Nelson W.C."/>
            <person name="Nierman W.C."/>
        </authorList>
    </citation>
    <scope>NUCLEOTIDE SEQUENCE [LARGE SCALE GENOMIC DNA]</scope>
    <source>
        <strain>California kid / ATCC 27343 / NCTC 10154</strain>
    </source>
</reference>
<feature type="chain" id="PRO_0000269345" description="Large ribosomal subunit protein bL21">
    <location>
        <begin position="1"/>
        <end position="100"/>
    </location>
</feature>
<proteinExistence type="inferred from homology"/>
<organism>
    <name type="scientific">Mycoplasma capricolum subsp. capricolum (strain California kid / ATCC 27343 / NCTC 10154)</name>
    <dbReference type="NCBI Taxonomy" id="340047"/>
    <lineage>
        <taxon>Bacteria</taxon>
        <taxon>Bacillati</taxon>
        <taxon>Mycoplasmatota</taxon>
        <taxon>Mollicutes</taxon>
        <taxon>Mycoplasmataceae</taxon>
        <taxon>Mycoplasma</taxon>
    </lineage>
</organism>
<evidence type="ECO:0000255" key="1">
    <source>
        <dbReference type="HAMAP-Rule" id="MF_01363"/>
    </source>
</evidence>
<evidence type="ECO:0000305" key="2"/>
<sequence>MFAIIKTGGKQVKVEPGQEIFIEKIKGEVNDKIAFDEILMIDGQIGTPTIEGAKVLGTIVKQGKAKKIRVIRYHPKKNVNKIYGHRQPYTKVKIEEISAK</sequence>
<accession>Q2SS76</accession>
<gene>
    <name evidence="1" type="primary">rplU</name>
    <name type="ordered locus">MCAP_0412</name>
</gene>
<dbReference type="EMBL" id="CP000123">
    <property type="protein sequence ID" value="ABC01792.1"/>
    <property type="molecule type" value="Genomic_DNA"/>
</dbReference>
<dbReference type="RefSeq" id="WP_011387287.1">
    <property type="nucleotide sequence ID" value="NC_007633.1"/>
</dbReference>
<dbReference type="SMR" id="Q2SS76"/>
<dbReference type="GeneID" id="23778632"/>
<dbReference type="KEGG" id="mcp:MCAP_0412"/>
<dbReference type="HOGENOM" id="CLU_061463_3_1_14"/>
<dbReference type="PhylomeDB" id="Q2SS76"/>
<dbReference type="Proteomes" id="UP000001928">
    <property type="component" value="Chromosome"/>
</dbReference>
<dbReference type="GO" id="GO:0005737">
    <property type="term" value="C:cytoplasm"/>
    <property type="evidence" value="ECO:0007669"/>
    <property type="project" value="UniProtKB-ARBA"/>
</dbReference>
<dbReference type="GO" id="GO:1990904">
    <property type="term" value="C:ribonucleoprotein complex"/>
    <property type="evidence" value="ECO:0007669"/>
    <property type="project" value="UniProtKB-KW"/>
</dbReference>
<dbReference type="GO" id="GO:0005840">
    <property type="term" value="C:ribosome"/>
    <property type="evidence" value="ECO:0007669"/>
    <property type="project" value="UniProtKB-KW"/>
</dbReference>
<dbReference type="GO" id="GO:0019843">
    <property type="term" value="F:rRNA binding"/>
    <property type="evidence" value="ECO:0007669"/>
    <property type="project" value="UniProtKB-UniRule"/>
</dbReference>
<dbReference type="GO" id="GO:0003735">
    <property type="term" value="F:structural constituent of ribosome"/>
    <property type="evidence" value="ECO:0007669"/>
    <property type="project" value="InterPro"/>
</dbReference>
<dbReference type="GO" id="GO:0006412">
    <property type="term" value="P:translation"/>
    <property type="evidence" value="ECO:0007669"/>
    <property type="project" value="UniProtKB-UniRule"/>
</dbReference>
<dbReference type="HAMAP" id="MF_01363">
    <property type="entry name" value="Ribosomal_bL21"/>
    <property type="match status" value="1"/>
</dbReference>
<dbReference type="InterPro" id="IPR028909">
    <property type="entry name" value="bL21-like"/>
</dbReference>
<dbReference type="InterPro" id="IPR036164">
    <property type="entry name" value="bL21-like_sf"/>
</dbReference>
<dbReference type="InterPro" id="IPR001787">
    <property type="entry name" value="Ribosomal_bL21"/>
</dbReference>
<dbReference type="InterPro" id="IPR018258">
    <property type="entry name" value="Ribosomal_bL21_CS"/>
</dbReference>
<dbReference type="NCBIfam" id="TIGR00061">
    <property type="entry name" value="L21"/>
    <property type="match status" value="1"/>
</dbReference>
<dbReference type="PANTHER" id="PTHR21349">
    <property type="entry name" value="50S RIBOSOMAL PROTEIN L21"/>
    <property type="match status" value="1"/>
</dbReference>
<dbReference type="PANTHER" id="PTHR21349:SF0">
    <property type="entry name" value="LARGE RIBOSOMAL SUBUNIT PROTEIN BL21M"/>
    <property type="match status" value="1"/>
</dbReference>
<dbReference type="Pfam" id="PF00829">
    <property type="entry name" value="Ribosomal_L21p"/>
    <property type="match status" value="1"/>
</dbReference>
<dbReference type="SUPFAM" id="SSF141091">
    <property type="entry name" value="L21p-like"/>
    <property type="match status" value="1"/>
</dbReference>
<dbReference type="PROSITE" id="PS01169">
    <property type="entry name" value="RIBOSOMAL_L21"/>
    <property type="match status" value="1"/>
</dbReference>
<keyword id="KW-0687">Ribonucleoprotein</keyword>
<keyword id="KW-0689">Ribosomal protein</keyword>
<keyword id="KW-0694">RNA-binding</keyword>
<keyword id="KW-0699">rRNA-binding</keyword>